<proteinExistence type="evidence at protein level"/>
<evidence type="ECO:0000255" key="1"/>
<evidence type="ECO:0000269" key="2">
    <source>
    </source>
</evidence>
<evidence type="ECO:0000303" key="3">
    <source>
    </source>
</evidence>
<evidence type="ECO:0000305" key="4"/>
<evidence type="ECO:0000305" key="5">
    <source>
    </source>
</evidence>
<dbReference type="GO" id="GO:0005576">
    <property type="term" value="C:extracellular region"/>
    <property type="evidence" value="ECO:0007669"/>
    <property type="project" value="UniProtKB-SubCell"/>
</dbReference>
<dbReference type="GO" id="GO:0042742">
    <property type="term" value="P:defense response to bacterium"/>
    <property type="evidence" value="ECO:0007669"/>
    <property type="project" value="UniProtKB-KW"/>
</dbReference>
<dbReference type="GO" id="GO:0019836">
    <property type="term" value="P:symbiont-mediated hemolysis of host erythrocyte"/>
    <property type="evidence" value="ECO:0007669"/>
    <property type="project" value="InterPro"/>
</dbReference>
<dbReference type="InterPro" id="IPR012518">
    <property type="entry name" value="Antimicrobial15"/>
</dbReference>
<dbReference type="InterPro" id="IPR004275">
    <property type="entry name" value="Frog_antimicrobial_propeptide"/>
</dbReference>
<dbReference type="InterPro" id="IPR016322">
    <property type="entry name" value="FSAP"/>
</dbReference>
<dbReference type="Pfam" id="PF08110">
    <property type="entry name" value="Antimicrobial15"/>
    <property type="match status" value="1"/>
</dbReference>
<dbReference type="Pfam" id="PF03032">
    <property type="entry name" value="FSAP_sig_propep"/>
    <property type="match status" value="1"/>
</dbReference>
<dbReference type="PIRSF" id="PIRSF001822">
    <property type="entry name" value="Dermaseptin_precursor"/>
    <property type="match status" value="1"/>
</dbReference>
<organism>
    <name type="scientific">Leptodactylus pustulatus</name>
    <name type="common">Ceara white-lipped frog</name>
    <dbReference type="NCBI Taxonomy" id="1349691"/>
    <lineage>
        <taxon>Eukaryota</taxon>
        <taxon>Metazoa</taxon>
        <taxon>Chordata</taxon>
        <taxon>Craniata</taxon>
        <taxon>Vertebrata</taxon>
        <taxon>Euteleostomi</taxon>
        <taxon>Amphibia</taxon>
        <taxon>Batrachia</taxon>
        <taxon>Anura</taxon>
        <taxon>Neobatrachia</taxon>
        <taxon>Hyloidea</taxon>
        <taxon>Leptodactylidae</taxon>
        <taxon>Leptodactylinae</taxon>
        <taxon>Leptodactylus</taxon>
    </lineage>
</organism>
<name>OCE6_LEPPU</name>
<comment type="function">
    <text evidence="2">Has antibacterial activity against Gram-negative bacterium E.coli ATCC 25922 (MIC=120 uM) but not against S.pneumoniae ATCC 700603, S.choleraesuis ATCC 14028 or against Gram-positive bacterium S.aureus ATCC 29313. Shows no hemolytic activity and no cytotoxicity.</text>
</comment>
<comment type="subcellular location">
    <subcellularLocation>
        <location evidence="2">Secreted</location>
    </subcellularLocation>
</comment>
<comment type="tissue specificity">
    <text evidence="5">Expressed by the skin glands.</text>
</comment>
<comment type="mass spectrometry" mass="3365.74" method="MALDI" evidence="2"/>
<comment type="similarity">
    <text evidence="4">Belongs to the frog skin active peptide (FSAP) family. Ocellatin subfamily.</text>
</comment>
<comment type="online information" name="The antimicrobial peptide database">
    <link uri="https://wangapd3.com/database/query_output.php?ID=02749"/>
</comment>
<feature type="signal peptide" evidence="1">
    <location>
        <begin position="1"/>
        <end position="22"/>
    </location>
</feature>
<feature type="propeptide" id="PRO_0000436218" evidence="4">
    <location>
        <begin position="23"/>
        <end position="39"/>
    </location>
</feature>
<feature type="peptide" id="PRO_0000436219" description="Ocellatin-PT6" evidence="2">
    <location>
        <begin position="42"/>
        <end position="73"/>
    </location>
</feature>
<keyword id="KW-0878">Amphibian defense peptide</keyword>
<keyword id="KW-0044">Antibiotic</keyword>
<keyword id="KW-0929">Antimicrobial</keyword>
<keyword id="KW-0165">Cleavage on pair of basic residues</keyword>
<keyword id="KW-0903">Direct protein sequencing</keyword>
<keyword id="KW-0964">Secreted</keyword>
<keyword id="KW-0732">Signal</keyword>
<reference evidence="4" key="1">
    <citation type="journal article" date="2015" name="J. Nat. Prod.">
        <title>Characterization and biological activities of ocellatin peptides from the skin secretion of the frog Leptodactylus pustulatus.</title>
        <authorList>
            <person name="Marani M.M."/>
            <person name="Dourado F.S."/>
            <person name="Quelemes P.V."/>
            <person name="de Araujo A.R."/>
            <person name="Perfeito M.L."/>
            <person name="Barbosa E.A."/>
            <person name="Veras L.M."/>
            <person name="Coelho A.L."/>
            <person name="Andrade E.B."/>
            <person name="Eaton P."/>
            <person name="Longo J.P."/>
            <person name="Azevedo R.B."/>
            <person name="Delerue-Matos C."/>
            <person name="Leite J.R."/>
        </authorList>
    </citation>
    <scope>NUCLEOTIDE SEQUENCE [MRNA]</scope>
    <scope>PROTEIN SEQUENCE OF 42-73</scope>
    <scope>FUNCTION</scope>
    <scope>SUBCELLULAR LOCATION</scope>
    <scope>MASS SPECTROMETRY</scope>
    <scope>IDENTIFICATION BY MASS SPECTROMETRY</scope>
    <source>
        <tissue evidence="3">Skin secretion</tissue>
    </source>
</reference>
<protein>
    <recommendedName>
        <fullName evidence="3">Ocellatin-PT6</fullName>
    </recommendedName>
</protein>
<accession>C0HK01</accession>
<sequence length="73" mass="8169">MAFLKKSLFLVLFLGLVSLSICDEEKRQDEDDDDDDDEEKRGVFDIIKGAGKQLIAHAMEKIAEKVGLNKDGN</sequence>